<feature type="signal peptide" evidence="2">
    <location>
        <begin position="1"/>
        <end position="21"/>
    </location>
</feature>
<feature type="chain" id="PRO_0000023883" description="Polygalacturonase inhibitor 2">
    <location>
        <begin position="22"/>
        <end position="330"/>
    </location>
</feature>
<feature type="repeat" description="LRR 1" evidence="2">
    <location>
        <begin position="69"/>
        <end position="93"/>
    </location>
</feature>
<feature type="repeat" description="LRR 2" evidence="2">
    <location>
        <begin position="94"/>
        <end position="117"/>
    </location>
</feature>
<feature type="repeat" description="LRR 3" evidence="2">
    <location>
        <begin position="118"/>
        <end position="141"/>
    </location>
</feature>
<feature type="repeat" description="LRR 4" evidence="2">
    <location>
        <begin position="142"/>
        <end position="166"/>
    </location>
</feature>
<feature type="repeat" description="LRR 5" evidence="2">
    <location>
        <begin position="167"/>
        <end position="192"/>
    </location>
</feature>
<feature type="repeat" description="LRR 6" evidence="2">
    <location>
        <begin position="194"/>
        <end position="215"/>
    </location>
</feature>
<feature type="repeat" description="LRR 7" evidence="2">
    <location>
        <begin position="217"/>
        <end position="237"/>
    </location>
</feature>
<feature type="repeat" description="LRR 8" evidence="2">
    <location>
        <begin position="238"/>
        <end position="260"/>
    </location>
</feature>
<feature type="repeat" description="LRR 9" evidence="2">
    <location>
        <begin position="261"/>
        <end position="285"/>
    </location>
</feature>
<feature type="repeat" description="LRR 10" evidence="2">
    <location>
        <begin position="287"/>
        <end position="308"/>
    </location>
</feature>
<feature type="glycosylation site" description="N-linked (GlcNAc...) asparagine" evidence="3">
    <location>
        <position position="106"/>
    </location>
</feature>
<feature type="glycosylation site" description="N-linked (GlcNAc...) asparagine" evidence="3">
    <location>
        <position position="120"/>
    </location>
</feature>
<feature type="glycosylation site" description="N-linked (GlcNAc...) asparagine" evidence="3">
    <location>
        <position position="130"/>
    </location>
</feature>
<feature type="glycosylation site" description="N-linked (GlcNAc...) asparagine" evidence="3">
    <location>
        <position position="291"/>
    </location>
</feature>
<feature type="disulfide bond" evidence="1">
    <location>
        <begin position="25"/>
        <end position="55"/>
    </location>
</feature>
<feature type="disulfide bond" evidence="1">
    <location>
        <begin position="56"/>
        <end position="63"/>
    </location>
</feature>
<feature type="disulfide bond" evidence="1">
    <location>
        <begin position="298"/>
        <end position="320"/>
    </location>
</feature>
<feature type="disulfide bond" evidence="1">
    <location>
        <begin position="322"/>
        <end position="329"/>
    </location>
</feature>
<protein>
    <recommendedName>
        <fullName>Polygalacturonase inhibitor 2</fullName>
    </recommendedName>
    <alternativeName>
        <fullName>Polygalacturonase-inhibiting protein 2</fullName>
        <shortName>PGIP-2</shortName>
    </alternativeName>
</protein>
<comment type="function">
    <text evidence="1">Inhibitor of fungal polygalacturonase. It is an important factor for plant resistance to phytopathogenic fungi.</text>
</comment>
<comment type="subcellular location">
    <subcellularLocation>
        <location evidence="1">Secreted</location>
        <location evidence="1">Cell wall</location>
    </subcellularLocation>
    <subcellularLocation>
        <location>Membrane</location>
        <topology>Peripheral membrane protein</topology>
    </subcellularLocation>
</comment>
<comment type="similarity">
    <text evidence="4">Belongs to the polygalacturonase-inhibiting protein family.</text>
</comment>
<gene>
    <name type="primary">PGIP2</name>
    <name type="ordered locus">At5g06870</name>
    <name type="ORF">MOJ9.4</name>
</gene>
<accession>Q9M5J8</accession>
<accession>Q9FL58</accession>
<name>PGIP2_ARATH</name>
<reference key="1">
    <citation type="journal article" date="1998" name="DNA Res.">
        <title>Structural analysis of Arabidopsis thaliana chromosome 5. V. Sequence features of the regions of 1,381,565 bp covered by twenty one physically assigned P1 and TAC clones.</title>
        <authorList>
            <person name="Kaneko T."/>
            <person name="Kotani H."/>
            <person name="Nakamura Y."/>
            <person name="Sato S."/>
            <person name="Asamizu E."/>
            <person name="Miyajima N."/>
            <person name="Tabata S."/>
        </authorList>
    </citation>
    <scope>NUCLEOTIDE SEQUENCE [LARGE SCALE GENOMIC DNA]</scope>
    <source>
        <strain>cv. Columbia</strain>
    </source>
</reference>
<reference key="2">
    <citation type="journal article" date="2017" name="Plant J.">
        <title>Araport11: a complete reannotation of the Arabidopsis thaliana reference genome.</title>
        <authorList>
            <person name="Cheng C.Y."/>
            <person name="Krishnakumar V."/>
            <person name="Chan A.P."/>
            <person name="Thibaud-Nissen F."/>
            <person name="Schobel S."/>
            <person name="Town C.D."/>
        </authorList>
    </citation>
    <scope>GENOME REANNOTATION</scope>
    <source>
        <strain>cv. Columbia</strain>
    </source>
</reference>
<reference key="3">
    <citation type="journal article" date="2003" name="Science">
        <title>Empirical analysis of transcriptional activity in the Arabidopsis genome.</title>
        <authorList>
            <person name="Yamada K."/>
            <person name="Lim J."/>
            <person name="Dale J.M."/>
            <person name="Chen H."/>
            <person name="Shinn P."/>
            <person name="Palm C.J."/>
            <person name="Southwick A.M."/>
            <person name="Wu H.C."/>
            <person name="Kim C.J."/>
            <person name="Nguyen M."/>
            <person name="Pham P.K."/>
            <person name="Cheuk R.F."/>
            <person name="Karlin-Newmann G."/>
            <person name="Liu S.X."/>
            <person name="Lam B."/>
            <person name="Sakano H."/>
            <person name="Wu T."/>
            <person name="Yu G."/>
            <person name="Miranda M."/>
            <person name="Quach H.L."/>
            <person name="Tripp M."/>
            <person name="Chang C.H."/>
            <person name="Lee J.M."/>
            <person name="Toriumi M.J."/>
            <person name="Chan M.M."/>
            <person name="Tang C.C."/>
            <person name="Onodera C.S."/>
            <person name="Deng J.M."/>
            <person name="Akiyama K."/>
            <person name="Ansari Y."/>
            <person name="Arakawa T."/>
            <person name="Banh J."/>
            <person name="Banno F."/>
            <person name="Bowser L."/>
            <person name="Brooks S.Y."/>
            <person name="Carninci P."/>
            <person name="Chao Q."/>
            <person name="Choy N."/>
            <person name="Enju A."/>
            <person name="Goldsmith A.D."/>
            <person name="Gurjal M."/>
            <person name="Hansen N.F."/>
            <person name="Hayashizaki Y."/>
            <person name="Johnson-Hopson C."/>
            <person name="Hsuan V.W."/>
            <person name="Iida K."/>
            <person name="Karnes M."/>
            <person name="Khan S."/>
            <person name="Koesema E."/>
            <person name="Ishida J."/>
            <person name="Jiang P.X."/>
            <person name="Jones T."/>
            <person name="Kawai J."/>
            <person name="Kamiya A."/>
            <person name="Meyers C."/>
            <person name="Nakajima M."/>
            <person name="Narusaka M."/>
            <person name="Seki M."/>
            <person name="Sakurai T."/>
            <person name="Satou M."/>
            <person name="Tamse R."/>
            <person name="Vaysberg M."/>
            <person name="Wallender E.K."/>
            <person name="Wong C."/>
            <person name="Yamamura Y."/>
            <person name="Yuan S."/>
            <person name="Shinozaki K."/>
            <person name="Davis R.W."/>
            <person name="Theologis A."/>
            <person name="Ecker J.R."/>
        </authorList>
    </citation>
    <scope>NUCLEOTIDE SEQUENCE [LARGE SCALE MRNA]</scope>
    <source>
        <strain>cv. Columbia</strain>
    </source>
</reference>
<reference key="4">
    <citation type="submission" date="2000-01" db="EMBL/GenBank/DDBJ databases">
        <title>Arabidopsis thaliana polygalacturonase inhibiting protein 2 (PGIP2) gene.</title>
        <authorList>
            <person name="Park B."/>
            <person name="Jin Y."/>
            <person name="Nam S."/>
            <person name="Kim H."/>
        </authorList>
    </citation>
    <scope>NUCLEOTIDE SEQUENCE OF 5-330</scope>
</reference>
<dbReference type="EMBL" id="AB010697">
    <property type="protein sequence ID" value="BAB11145.1"/>
    <property type="molecule type" value="Genomic_DNA"/>
</dbReference>
<dbReference type="EMBL" id="CP002688">
    <property type="protein sequence ID" value="AED91077.1"/>
    <property type="molecule type" value="Genomic_DNA"/>
</dbReference>
<dbReference type="EMBL" id="AY035121">
    <property type="protein sequence ID" value="AAK59626.1"/>
    <property type="molecule type" value="mRNA"/>
</dbReference>
<dbReference type="EMBL" id="AY113916">
    <property type="protein sequence ID" value="AAM44964.1"/>
    <property type="molecule type" value="mRNA"/>
</dbReference>
<dbReference type="EMBL" id="AF229250">
    <property type="protein sequence ID" value="AAF69828.1"/>
    <property type="molecule type" value="mRNA"/>
</dbReference>
<dbReference type="RefSeq" id="NP_196305.1">
    <property type="nucleotide sequence ID" value="NM_120770.4"/>
</dbReference>
<dbReference type="SMR" id="Q9M5J8"/>
<dbReference type="FunCoup" id="Q9M5J8">
    <property type="interactions" value="316"/>
</dbReference>
<dbReference type="STRING" id="3702.Q9M5J8"/>
<dbReference type="GlyCosmos" id="Q9M5J8">
    <property type="glycosylation" value="4 sites, No reported glycans"/>
</dbReference>
<dbReference type="GlyGen" id="Q9M5J8">
    <property type="glycosylation" value="4 sites"/>
</dbReference>
<dbReference type="iPTMnet" id="Q9M5J8"/>
<dbReference type="PaxDb" id="3702-AT5G06870.1"/>
<dbReference type="ProteomicsDB" id="234995"/>
<dbReference type="EnsemblPlants" id="AT5G06870.1">
    <property type="protein sequence ID" value="AT5G06870.1"/>
    <property type="gene ID" value="AT5G06870"/>
</dbReference>
<dbReference type="GeneID" id="830578"/>
<dbReference type="Gramene" id="AT5G06870.1">
    <property type="protein sequence ID" value="AT5G06870.1"/>
    <property type="gene ID" value="AT5G06870"/>
</dbReference>
<dbReference type="KEGG" id="ath:AT5G06870"/>
<dbReference type="Araport" id="AT5G06870"/>
<dbReference type="TAIR" id="AT5G06870">
    <property type="gene designation" value="PGIP2"/>
</dbReference>
<dbReference type="eggNOG" id="ENOG502QRQP">
    <property type="taxonomic scope" value="Eukaryota"/>
</dbReference>
<dbReference type="HOGENOM" id="CLU_000288_18_22_1"/>
<dbReference type="InParanoid" id="Q9M5J8"/>
<dbReference type="OMA" id="WIVDISR"/>
<dbReference type="PhylomeDB" id="Q9M5J8"/>
<dbReference type="CD-CODE" id="4299E36E">
    <property type="entry name" value="Nucleolus"/>
</dbReference>
<dbReference type="PRO" id="PR:Q9M5J8"/>
<dbReference type="Proteomes" id="UP000006548">
    <property type="component" value="Chromosome 5"/>
</dbReference>
<dbReference type="ExpressionAtlas" id="Q9M5J8">
    <property type="expression patterns" value="baseline and differential"/>
</dbReference>
<dbReference type="GO" id="GO:0005576">
    <property type="term" value="C:extracellular region"/>
    <property type="evidence" value="ECO:0007669"/>
    <property type="project" value="UniProtKB-KW"/>
</dbReference>
<dbReference type="GO" id="GO:0016020">
    <property type="term" value="C:membrane"/>
    <property type="evidence" value="ECO:0007669"/>
    <property type="project" value="UniProtKB-SubCell"/>
</dbReference>
<dbReference type="GO" id="GO:0009505">
    <property type="term" value="C:plant-type cell wall"/>
    <property type="evidence" value="ECO:0007005"/>
    <property type="project" value="TAIR"/>
</dbReference>
<dbReference type="GO" id="GO:0009506">
    <property type="term" value="C:plasmodesma"/>
    <property type="evidence" value="ECO:0007005"/>
    <property type="project" value="TAIR"/>
</dbReference>
<dbReference type="GO" id="GO:0090353">
    <property type="term" value="F:polygalacturonase inhibitor activity"/>
    <property type="evidence" value="ECO:0000314"/>
    <property type="project" value="TAIR"/>
</dbReference>
<dbReference type="FunFam" id="3.80.10.10:FF:000348">
    <property type="entry name" value="Polygalacturonase inhibitor 1"/>
    <property type="match status" value="1"/>
</dbReference>
<dbReference type="Gene3D" id="3.80.10.10">
    <property type="entry name" value="Ribonuclease Inhibitor"/>
    <property type="match status" value="1"/>
</dbReference>
<dbReference type="InterPro" id="IPR001611">
    <property type="entry name" value="Leu-rich_rpt"/>
</dbReference>
<dbReference type="InterPro" id="IPR032675">
    <property type="entry name" value="LRR_dom_sf"/>
</dbReference>
<dbReference type="InterPro" id="IPR013210">
    <property type="entry name" value="LRR_N_plant-typ"/>
</dbReference>
<dbReference type="InterPro" id="IPR051848">
    <property type="entry name" value="PGIP"/>
</dbReference>
<dbReference type="PANTHER" id="PTHR48059">
    <property type="entry name" value="POLYGALACTURONASE INHIBITOR 1"/>
    <property type="match status" value="1"/>
</dbReference>
<dbReference type="PANTHER" id="PTHR48059:SF4">
    <property type="entry name" value="POLYGALACTURONASE INHIBITOR 1-RELATED"/>
    <property type="match status" value="1"/>
</dbReference>
<dbReference type="Pfam" id="PF00560">
    <property type="entry name" value="LRR_1"/>
    <property type="match status" value="2"/>
</dbReference>
<dbReference type="Pfam" id="PF13855">
    <property type="entry name" value="LRR_8"/>
    <property type="match status" value="1"/>
</dbReference>
<dbReference type="Pfam" id="PF08263">
    <property type="entry name" value="LRRNT_2"/>
    <property type="match status" value="1"/>
</dbReference>
<dbReference type="PRINTS" id="PR00019">
    <property type="entry name" value="LEURICHRPT"/>
</dbReference>
<dbReference type="SUPFAM" id="SSF52058">
    <property type="entry name" value="L domain-like"/>
    <property type="match status" value="1"/>
</dbReference>
<sequence length="330" mass="37068">MDKTMTLFLLLSTLLLTTSLAKDLCHKDDKTTLLKIKKSLNNPYHLASWDPKTDCCSWYCLECGDATVNHRVTSLIIQDGEISGQIPPEVGDLPYLTSLIFRKLTNLTGHIQPTIAKLKNLTFLRLSWTNLTGPVPEFLSQLKNLEYIDLSFNDLSGSIPSSLSSLRKLEYLELSRNKLTGPIPESFGTFSGKVPSLFLSHNQLSGTIPKSLGNPDFYRIDLSRNKLQGDASILFGAKKTTWIVDISRNMFQFDLSKVKLAKTLNNLDMNHNGITGSIPAEWSKAYFQLLNVSYNRLCGRIPKGEYIQRFDSYSFFHNKCLCGAPLPSCK</sequence>
<proteinExistence type="evidence at transcript level"/>
<keyword id="KW-0134">Cell wall</keyword>
<keyword id="KW-1015">Disulfide bond</keyword>
<keyword id="KW-0325">Glycoprotein</keyword>
<keyword id="KW-0433">Leucine-rich repeat</keyword>
<keyword id="KW-0472">Membrane</keyword>
<keyword id="KW-1185">Reference proteome</keyword>
<keyword id="KW-0677">Repeat</keyword>
<keyword id="KW-0964">Secreted</keyword>
<keyword id="KW-0732">Signal</keyword>
<evidence type="ECO:0000250" key="1">
    <source>
        <dbReference type="UniProtKB" id="P58822"/>
    </source>
</evidence>
<evidence type="ECO:0000255" key="2"/>
<evidence type="ECO:0000255" key="3">
    <source>
        <dbReference type="PROSITE-ProRule" id="PRU00498"/>
    </source>
</evidence>
<evidence type="ECO:0000305" key="4"/>
<organism>
    <name type="scientific">Arabidopsis thaliana</name>
    <name type="common">Mouse-ear cress</name>
    <dbReference type="NCBI Taxonomy" id="3702"/>
    <lineage>
        <taxon>Eukaryota</taxon>
        <taxon>Viridiplantae</taxon>
        <taxon>Streptophyta</taxon>
        <taxon>Embryophyta</taxon>
        <taxon>Tracheophyta</taxon>
        <taxon>Spermatophyta</taxon>
        <taxon>Magnoliopsida</taxon>
        <taxon>eudicotyledons</taxon>
        <taxon>Gunneridae</taxon>
        <taxon>Pentapetalae</taxon>
        <taxon>rosids</taxon>
        <taxon>malvids</taxon>
        <taxon>Brassicales</taxon>
        <taxon>Brassicaceae</taxon>
        <taxon>Camelineae</taxon>
        <taxon>Arabidopsis</taxon>
    </lineage>
</organism>